<feature type="chain" id="PRO_0000358681" description="NADH-quinone oxidoreductase subunit C/D">
    <location>
        <begin position="1"/>
        <end position="600"/>
    </location>
</feature>
<feature type="region of interest" description="NADH dehydrogenase I subunit C" evidence="1">
    <location>
        <begin position="1"/>
        <end position="190"/>
    </location>
</feature>
<feature type="region of interest" description="NADH dehydrogenase I subunit D" evidence="1">
    <location>
        <begin position="214"/>
        <end position="600"/>
    </location>
</feature>
<reference key="1">
    <citation type="submission" date="2007-11" db="EMBL/GenBank/DDBJ databases">
        <authorList>
            <consortium name="The Salmonella enterica serovar Arizonae Genome Sequencing Project"/>
            <person name="McClelland M."/>
            <person name="Sanderson E.K."/>
            <person name="Porwollik S."/>
            <person name="Spieth J."/>
            <person name="Clifton W.S."/>
            <person name="Fulton R."/>
            <person name="Chunyan W."/>
            <person name="Wollam A."/>
            <person name="Shah N."/>
            <person name="Pepin K."/>
            <person name="Bhonagiri V."/>
            <person name="Nash W."/>
            <person name="Johnson M."/>
            <person name="Thiruvilangam P."/>
            <person name="Wilson R."/>
        </authorList>
    </citation>
    <scope>NUCLEOTIDE SEQUENCE [LARGE SCALE GENOMIC DNA]</scope>
    <source>
        <strain>ATCC BAA-731 / CDC346-86 / RSK2980</strain>
    </source>
</reference>
<proteinExistence type="inferred from homology"/>
<evidence type="ECO:0000255" key="1">
    <source>
        <dbReference type="HAMAP-Rule" id="MF_01359"/>
    </source>
</evidence>
<name>NUOCD_SALAR</name>
<protein>
    <recommendedName>
        <fullName evidence="1">NADH-quinone oxidoreductase subunit C/D</fullName>
        <ecNumber evidence="1">7.1.1.-</ecNumber>
    </recommendedName>
    <alternativeName>
        <fullName evidence="1">NADH dehydrogenase I subunit C/D</fullName>
    </alternativeName>
    <alternativeName>
        <fullName evidence="1">NDH-1 subunit C/D</fullName>
    </alternativeName>
</protein>
<keyword id="KW-0997">Cell inner membrane</keyword>
<keyword id="KW-1003">Cell membrane</keyword>
<keyword id="KW-0472">Membrane</keyword>
<keyword id="KW-0511">Multifunctional enzyme</keyword>
<keyword id="KW-0520">NAD</keyword>
<keyword id="KW-0874">Quinone</keyword>
<keyword id="KW-1185">Reference proteome</keyword>
<keyword id="KW-1278">Translocase</keyword>
<keyword id="KW-0813">Transport</keyword>
<keyword id="KW-0830">Ubiquinone</keyword>
<comment type="function">
    <text evidence="1">NDH-1 shuttles electrons from NADH, via FMN and iron-sulfur (Fe-S) centers, to quinones in the respiratory chain. The immediate electron acceptor for the enzyme in this species is believed to be ubiquinone. Couples the redox reaction to proton translocation (for every two electrons transferred, four hydrogen ions are translocated across the cytoplasmic membrane), and thus conserves the redox energy in a proton gradient.</text>
</comment>
<comment type="catalytic activity">
    <reaction evidence="1">
        <text>a quinone + NADH + 5 H(+)(in) = a quinol + NAD(+) + 4 H(+)(out)</text>
        <dbReference type="Rhea" id="RHEA:57888"/>
        <dbReference type="ChEBI" id="CHEBI:15378"/>
        <dbReference type="ChEBI" id="CHEBI:24646"/>
        <dbReference type="ChEBI" id="CHEBI:57540"/>
        <dbReference type="ChEBI" id="CHEBI:57945"/>
        <dbReference type="ChEBI" id="CHEBI:132124"/>
    </reaction>
</comment>
<comment type="subunit">
    <text evidence="1">NDH-1 is composed of 13 different subunits. Subunits NuoB, CD, E, F, and G constitute the peripheral sector of the complex.</text>
</comment>
<comment type="subcellular location">
    <subcellularLocation>
        <location evidence="1">Cell inner membrane</location>
        <topology evidence="1">Peripheral membrane protein</topology>
        <orientation evidence="1">Cytoplasmic side</orientation>
    </subcellularLocation>
</comment>
<comment type="similarity">
    <text evidence="1">In the N-terminal section; belongs to the complex I 30 kDa subunit family.</text>
</comment>
<comment type="similarity">
    <text evidence="1">In the C-terminal section; belongs to the complex I 49 kDa subunit family.</text>
</comment>
<accession>A9MJ99</accession>
<gene>
    <name evidence="1" type="primary">nuoC</name>
    <name evidence="1" type="synonym">nuoCD</name>
    <name evidence="1" type="synonym">nuoD</name>
    <name type="ordered locus">SARI_00573</name>
</gene>
<dbReference type="EC" id="7.1.1.-" evidence="1"/>
<dbReference type="EMBL" id="CP000880">
    <property type="protein sequence ID" value="ABX20499.1"/>
    <property type="molecule type" value="Genomic_DNA"/>
</dbReference>
<dbReference type="SMR" id="A9MJ99"/>
<dbReference type="STRING" id="41514.SARI_00573"/>
<dbReference type="KEGG" id="ses:SARI_00573"/>
<dbReference type="HOGENOM" id="CLU_015134_3_2_6"/>
<dbReference type="Proteomes" id="UP000002084">
    <property type="component" value="Chromosome"/>
</dbReference>
<dbReference type="GO" id="GO:0030964">
    <property type="term" value="C:NADH dehydrogenase complex"/>
    <property type="evidence" value="ECO:0007669"/>
    <property type="project" value="InterPro"/>
</dbReference>
<dbReference type="GO" id="GO:0005886">
    <property type="term" value="C:plasma membrane"/>
    <property type="evidence" value="ECO:0007669"/>
    <property type="project" value="UniProtKB-SubCell"/>
</dbReference>
<dbReference type="GO" id="GO:0051287">
    <property type="term" value="F:NAD binding"/>
    <property type="evidence" value="ECO:0007669"/>
    <property type="project" value="InterPro"/>
</dbReference>
<dbReference type="GO" id="GO:0008137">
    <property type="term" value="F:NADH dehydrogenase (ubiquinone) activity"/>
    <property type="evidence" value="ECO:0007669"/>
    <property type="project" value="InterPro"/>
</dbReference>
<dbReference type="GO" id="GO:0050136">
    <property type="term" value="F:NADH:ubiquinone reductase (non-electrogenic) activity"/>
    <property type="evidence" value="ECO:0007669"/>
    <property type="project" value="UniProtKB-UniRule"/>
</dbReference>
<dbReference type="GO" id="GO:0048038">
    <property type="term" value="F:quinone binding"/>
    <property type="evidence" value="ECO:0007669"/>
    <property type="project" value="UniProtKB-KW"/>
</dbReference>
<dbReference type="FunFam" id="1.10.645.10:FF:000001">
    <property type="entry name" value="NADH-quinone oxidoreductase subunit C/D"/>
    <property type="match status" value="1"/>
</dbReference>
<dbReference type="FunFam" id="3.30.460.80:FF:000001">
    <property type="entry name" value="NADH-quinone oxidoreductase subunit C/D"/>
    <property type="match status" value="1"/>
</dbReference>
<dbReference type="Gene3D" id="1.10.645.10">
    <property type="entry name" value="Cytochrome-c3 Hydrogenase, chain B"/>
    <property type="match status" value="1"/>
</dbReference>
<dbReference type="Gene3D" id="3.30.460.80">
    <property type="entry name" value="NADH:ubiquinone oxidoreductase, 30kDa subunit"/>
    <property type="match status" value="1"/>
</dbReference>
<dbReference type="HAMAP" id="MF_01359">
    <property type="entry name" value="NDH1_NuoCD_1"/>
    <property type="match status" value="1"/>
</dbReference>
<dbReference type="HAMAP" id="MF_01358">
    <property type="entry name" value="NDH1_NuoD"/>
    <property type="match status" value="1"/>
</dbReference>
<dbReference type="InterPro" id="IPR010218">
    <property type="entry name" value="NADH_DH_suC"/>
</dbReference>
<dbReference type="InterPro" id="IPR023062">
    <property type="entry name" value="NADH_DH_suCD"/>
</dbReference>
<dbReference type="InterPro" id="IPR001135">
    <property type="entry name" value="NADH_Q_OxRdtase_suD"/>
</dbReference>
<dbReference type="InterPro" id="IPR037232">
    <property type="entry name" value="NADH_quin_OxRdtase_su_C/D-like"/>
</dbReference>
<dbReference type="InterPro" id="IPR001268">
    <property type="entry name" value="NADH_UbQ_OxRdtase_30kDa_su"/>
</dbReference>
<dbReference type="InterPro" id="IPR014029">
    <property type="entry name" value="NADH_UbQ_OxRdtase_49kDa_CS"/>
</dbReference>
<dbReference type="InterPro" id="IPR022885">
    <property type="entry name" value="NDH1_su_D/H"/>
</dbReference>
<dbReference type="InterPro" id="IPR029014">
    <property type="entry name" value="NiFe-Hase_large"/>
</dbReference>
<dbReference type="NCBIfam" id="TIGR01961">
    <property type="entry name" value="NuoC_fam"/>
    <property type="match status" value="1"/>
</dbReference>
<dbReference type="NCBIfam" id="TIGR01962">
    <property type="entry name" value="NuoD"/>
    <property type="match status" value="1"/>
</dbReference>
<dbReference type="NCBIfam" id="NF004739">
    <property type="entry name" value="PRK06075.1"/>
    <property type="match status" value="1"/>
</dbReference>
<dbReference type="NCBIfam" id="NF008728">
    <property type="entry name" value="PRK11742.1"/>
    <property type="match status" value="1"/>
</dbReference>
<dbReference type="PANTHER" id="PTHR11993:SF45">
    <property type="entry name" value="NADH-QUINONE OXIDOREDUCTASE SUBUNIT C_D"/>
    <property type="match status" value="1"/>
</dbReference>
<dbReference type="PANTHER" id="PTHR11993">
    <property type="entry name" value="NADH-UBIQUINONE OXIDOREDUCTASE 49 KDA SUBUNIT"/>
    <property type="match status" value="1"/>
</dbReference>
<dbReference type="Pfam" id="PF00329">
    <property type="entry name" value="Complex1_30kDa"/>
    <property type="match status" value="1"/>
</dbReference>
<dbReference type="Pfam" id="PF00346">
    <property type="entry name" value="Complex1_49kDa"/>
    <property type="match status" value="1"/>
</dbReference>
<dbReference type="SUPFAM" id="SSF56762">
    <property type="entry name" value="HydB/Nqo4-like"/>
    <property type="match status" value="1"/>
</dbReference>
<dbReference type="SUPFAM" id="SSF143243">
    <property type="entry name" value="Nqo5-like"/>
    <property type="match status" value="1"/>
</dbReference>
<dbReference type="PROSITE" id="PS00535">
    <property type="entry name" value="COMPLEX1_49K"/>
    <property type="match status" value="1"/>
</dbReference>
<organism>
    <name type="scientific">Salmonella arizonae (strain ATCC BAA-731 / CDC346-86 / RSK2980)</name>
    <dbReference type="NCBI Taxonomy" id="41514"/>
    <lineage>
        <taxon>Bacteria</taxon>
        <taxon>Pseudomonadati</taxon>
        <taxon>Pseudomonadota</taxon>
        <taxon>Gammaproteobacteria</taxon>
        <taxon>Enterobacterales</taxon>
        <taxon>Enterobacteriaceae</taxon>
        <taxon>Salmonella</taxon>
    </lineage>
</organism>
<sequence>MVNNMTDLTAQDAAWSTRDHLDDPVIGELRNRFGPDAFTVQATRTGVPVVWVKREQLLEVGDFLKKLPKPYVMLFDLHGMDERLRTHRDGLPAADFSVFYHLISIERNRDIMLKVALSENDLRVPTFTKLFPNANWYERETWEMFGIDIEGHPHLTRIMMPQTWEGHPLRKDYPARATEFDPFELTKAKQDLEMEALTFKPEDWGMKRGTDNEDFMFLNLGPNHPSAHGAFRIILQLDGEEIVDCVPDIGYHHRGAEKMGERQSWHSYIPYTDRIEYLGGCVNEMPYVLAVEKLAGITVPDRVNVIRVMLSELFRINSHLLYISTFIQDVGAMTPVFFAFTDRQKIYDLVEAITGFRMHPAWFRIGGVAHDLPRGWERLLREFLEWMPKRLDSYEKAALRNTILKGRSQGVAAYGAKEALEWGTTGAGLRATGIDFDVRKWRPYSGYENFDFEVPVGGGVSDCYTRVMLKVEELRQSLRILQQCLDNMPEGPFKADHPLTTPPPKERTLQHIETLITHFLQVSWGPVMPAQESFQMVEATKGINSYYLTSDGSTMSYRTRVRTPSFAHLQQIPSAIRGSLVSDLIVYLGSIDFVMSDVDR</sequence>